<evidence type="ECO:0000255" key="1">
    <source>
        <dbReference type="HAMAP-Rule" id="MF_01318"/>
    </source>
</evidence>
<evidence type="ECO:0000305" key="2"/>
<keyword id="KW-0678">Repressor</keyword>
<keyword id="KW-0687">Ribonucleoprotein</keyword>
<keyword id="KW-0689">Ribosomal protein</keyword>
<keyword id="KW-0694">RNA-binding</keyword>
<keyword id="KW-0699">rRNA-binding</keyword>
<keyword id="KW-0810">Translation regulation</keyword>
<keyword id="KW-0820">tRNA-binding</keyword>
<dbReference type="EMBL" id="AE017223">
    <property type="protein sequence ID" value="AAX74589.1"/>
    <property type="molecule type" value="Genomic_DNA"/>
</dbReference>
<dbReference type="RefSeq" id="WP_002964373.1">
    <property type="nucleotide sequence ID" value="NC_006932.1"/>
</dbReference>
<dbReference type="SMR" id="Q57CP5"/>
<dbReference type="EnsemblBacteria" id="AAX74589">
    <property type="protein sequence ID" value="AAX74589"/>
    <property type="gene ID" value="BruAb1_1251"/>
</dbReference>
<dbReference type="GeneID" id="97533514"/>
<dbReference type="KEGG" id="bmb:BruAb1_1251"/>
<dbReference type="HOGENOM" id="CLU_062853_0_0_5"/>
<dbReference type="Proteomes" id="UP000000540">
    <property type="component" value="Chromosome I"/>
</dbReference>
<dbReference type="GO" id="GO:0022625">
    <property type="term" value="C:cytosolic large ribosomal subunit"/>
    <property type="evidence" value="ECO:0007669"/>
    <property type="project" value="TreeGrafter"/>
</dbReference>
<dbReference type="GO" id="GO:0019843">
    <property type="term" value="F:rRNA binding"/>
    <property type="evidence" value="ECO:0007669"/>
    <property type="project" value="UniProtKB-UniRule"/>
</dbReference>
<dbReference type="GO" id="GO:0003735">
    <property type="term" value="F:structural constituent of ribosome"/>
    <property type="evidence" value="ECO:0007669"/>
    <property type="project" value="InterPro"/>
</dbReference>
<dbReference type="GO" id="GO:0000049">
    <property type="term" value="F:tRNA binding"/>
    <property type="evidence" value="ECO:0007669"/>
    <property type="project" value="UniProtKB-KW"/>
</dbReference>
<dbReference type="GO" id="GO:0006417">
    <property type="term" value="P:regulation of translation"/>
    <property type="evidence" value="ECO:0007669"/>
    <property type="project" value="UniProtKB-KW"/>
</dbReference>
<dbReference type="GO" id="GO:0006412">
    <property type="term" value="P:translation"/>
    <property type="evidence" value="ECO:0007669"/>
    <property type="project" value="UniProtKB-UniRule"/>
</dbReference>
<dbReference type="CDD" id="cd00403">
    <property type="entry name" value="Ribosomal_L1"/>
    <property type="match status" value="1"/>
</dbReference>
<dbReference type="FunFam" id="3.40.50.790:FF:000001">
    <property type="entry name" value="50S ribosomal protein L1"/>
    <property type="match status" value="1"/>
</dbReference>
<dbReference type="Gene3D" id="3.30.190.20">
    <property type="match status" value="1"/>
</dbReference>
<dbReference type="Gene3D" id="3.40.50.790">
    <property type="match status" value="1"/>
</dbReference>
<dbReference type="HAMAP" id="MF_01318_B">
    <property type="entry name" value="Ribosomal_uL1_B"/>
    <property type="match status" value="1"/>
</dbReference>
<dbReference type="InterPro" id="IPR005878">
    <property type="entry name" value="Ribosom_uL1_bac-type"/>
</dbReference>
<dbReference type="InterPro" id="IPR002143">
    <property type="entry name" value="Ribosomal_uL1"/>
</dbReference>
<dbReference type="InterPro" id="IPR023674">
    <property type="entry name" value="Ribosomal_uL1-like"/>
</dbReference>
<dbReference type="InterPro" id="IPR028364">
    <property type="entry name" value="Ribosomal_uL1/biogenesis"/>
</dbReference>
<dbReference type="InterPro" id="IPR016095">
    <property type="entry name" value="Ribosomal_uL1_3-a/b-sand"/>
</dbReference>
<dbReference type="InterPro" id="IPR023673">
    <property type="entry name" value="Ribosomal_uL1_CS"/>
</dbReference>
<dbReference type="NCBIfam" id="TIGR01169">
    <property type="entry name" value="rplA_bact"/>
    <property type="match status" value="1"/>
</dbReference>
<dbReference type="PANTHER" id="PTHR36427">
    <property type="entry name" value="54S RIBOSOMAL PROTEIN L1, MITOCHONDRIAL"/>
    <property type="match status" value="1"/>
</dbReference>
<dbReference type="PANTHER" id="PTHR36427:SF3">
    <property type="entry name" value="LARGE RIBOSOMAL SUBUNIT PROTEIN UL1M"/>
    <property type="match status" value="1"/>
</dbReference>
<dbReference type="Pfam" id="PF00687">
    <property type="entry name" value="Ribosomal_L1"/>
    <property type="match status" value="1"/>
</dbReference>
<dbReference type="PIRSF" id="PIRSF002155">
    <property type="entry name" value="Ribosomal_L1"/>
    <property type="match status" value="1"/>
</dbReference>
<dbReference type="SUPFAM" id="SSF56808">
    <property type="entry name" value="Ribosomal protein L1"/>
    <property type="match status" value="1"/>
</dbReference>
<dbReference type="PROSITE" id="PS01199">
    <property type="entry name" value="RIBOSOMAL_L1"/>
    <property type="match status" value="1"/>
</dbReference>
<feature type="chain" id="PRO_0000230593" description="Large ribosomal subunit protein uL1">
    <location>
        <begin position="1"/>
        <end position="233"/>
    </location>
</feature>
<comment type="function">
    <text evidence="1">Binds directly to 23S rRNA. The L1 stalk is quite mobile in the ribosome, and is involved in E site tRNA release.</text>
</comment>
<comment type="function">
    <text evidence="1">Protein L1 is also a translational repressor protein, it controls the translation of the L11 operon by binding to its mRNA.</text>
</comment>
<comment type="subunit">
    <text evidence="1">Part of the 50S ribosomal subunit.</text>
</comment>
<comment type="similarity">
    <text evidence="1">Belongs to the universal ribosomal protein uL1 family.</text>
</comment>
<reference key="1">
    <citation type="journal article" date="2005" name="J. Bacteriol.">
        <title>Completion of the genome sequence of Brucella abortus and comparison to the highly similar genomes of Brucella melitensis and Brucella suis.</title>
        <authorList>
            <person name="Halling S.M."/>
            <person name="Peterson-Burch B.D."/>
            <person name="Bricker B.J."/>
            <person name="Zuerner R.L."/>
            <person name="Qing Z."/>
            <person name="Li L.-L."/>
            <person name="Kapur V."/>
            <person name="Alt D.P."/>
            <person name="Olsen S.C."/>
        </authorList>
    </citation>
    <scope>NUCLEOTIDE SEQUENCE [LARGE SCALE GENOMIC DNA]</scope>
    <source>
        <strain>9-941</strain>
    </source>
</reference>
<organism>
    <name type="scientific">Brucella abortus biovar 1 (strain 9-941)</name>
    <dbReference type="NCBI Taxonomy" id="262698"/>
    <lineage>
        <taxon>Bacteria</taxon>
        <taxon>Pseudomonadati</taxon>
        <taxon>Pseudomonadota</taxon>
        <taxon>Alphaproteobacteria</taxon>
        <taxon>Hyphomicrobiales</taxon>
        <taxon>Brucellaceae</taxon>
        <taxon>Brucella/Ochrobactrum group</taxon>
        <taxon>Brucella</taxon>
    </lineage>
</organism>
<name>RL1_BRUAB</name>
<gene>
    <name evidence="1" type="primary">rplA</name>
    <name type="ordered locus">BruAb1_1251</name>
</gene>
<proteinExistence type="inferred from homology"/>
<sequence>MAKISKRINKIREGVDRNKLYDLSAAIGLVKERAVAKFDETVEIAMNLGVDPRHADQMVRGVVNLPNGTGRTVRVAVFARGDKAEEAKKAGADIVGAEELFEIVNGGKIEFDRCIATPDMMPLVGRLGKVLGPRGMMPNPKVGTVTTDVAAAVAASKGGAVEFRVEKAGIIHAGIGKVSFDNAKLEENIKAFADAVIKAKPSAAKGEYVKRVSISSTMGVGVKVDPSTVKVVD</sequence>
<protein>
    <recommendedName>
        <fullName evidence="1">Large ribosomal subunit protein uL1</fullName>
    </recommendedName>
    <alternativeName>
        <fullName evidence="2">50S ribosomal protein L1</fullName>
    </alternativeName>
</protein>
<accession>Q57CP5</accession>